<protein>
    <recommendedName>
        <fullName>Translation initiation factor eIF2B subunit delta</fullName>
    </recommendedName>
    <alternativeName>
        <fullName>eIF2B GDP-GTP exchange factor subunit delta</fullName>
    </alternativeName>
</protein>
<keyword id="KW-0007">Acetylation</keyword>
<keyword id="KW-0963">Cytoplasm</keyword>
<keyword id="KW-0396">Initiation factor</keyword>
<keyword id="KW-0597">Phosphoprotein</keyword>
<keyword id="KW-0648">Protein biosynthesis</keyword>
<keyword id="KW-1185">Reference proteome</keyword>
<proteinExistence type="evidence at transcript level"/>
<evidence type="ECO:0000250" key="1">
    <source>
        <dbReference type="UniProtKB" id="Q09924"/>
    </source>
</evidence>
<evidence type="ECO:0000250" key="2">
    <source>
        <dbReference type="UniProtKB" id="Q9UI10"/>
    </source>
</evidence>
<evidence type="ECO:0000256" key="3">
    <source>
        <dbReference type="SAM" id="MobiDB-lite"/>
    </source>
</evidence>
<evidence type="ECO:0000305" key="4"/>
<gene>
    <name type="primary">EIF2B4</name>
    <name type="synonym">EIF2BD</name>
</gene>
<feature type="initiator methionine" description="Removed" evidence="2">
    <location>
        <position position="1"/>
    </location>
</feature>
<feature type="chain" id="PRO_0000156069" description="Translation initiation factor eIF2B subunit delta">
    <location>
        <begin position="2"/>
        <end position="523"/>
    </location>
</feature>
<feature type="region of interest" description="Disordered" evidence="3">
    <location>
        <begin position="1"/>
        <end position="154"/>
    </location>
</feature>
<feature type="region of interest" description="May bind the chemical integrated stress response (ISR) inhibitor ISRIB" evidence="2">
    <location>
        <begin position="170"/>
        <end position="179"/>
    </location>
</feature>
<feature type="compositionally biased region" description="Basic and acidic residues" evidence="3">
    <location>
        <begin position="31"/>
        <end position="40"/>
    </location>
</feature>
<feature type="compositionally biased region" description="Basic residues" evidence="3">
    <location>
        <begin position="41"/>
        <end position="51"/>
    </location>
</feature>
<feature type="compositionally biased region" description="Basic and acidic residues" evidence="3">
    <location>
        <begin position="95"/>
        <end position="120"/>
    </location>
</feature>
<feature type="modified residue" description="N-acetylalanine" evidence="2">
    <location>
        <position position="2"/>
    </location>
</feature>
<feature type="modified residue" description="Phosphoserine" evidence="2">
    <location>
        <position position="12"/>
    </location>
</feature>
<feature type="modified residue" description="Phosphothreonine" evidence="2">
    <location>
        <position position="85"/>
    </location>
</feature>
<feature type="modified residue" description="Phosphoserine" evidence="2">
    <location>
        <position position="129"/>
    </location>
</feature>
<dbReference type="EMBL" id="X75451">
    <property type="protein sequence ID" value="CAA53204.1"/>
    <property type="status" value="ALT_INIT"/>
    <property type="molecule type" value="mRNA"/>
</dbReference>
<dbReference type="PIR" id="S42727">
    <property type="entry name" value="S42727"/>
</dbReference>
<dbReference type="RefSeq" id="NP_001076241.1">
    <property type="nucleotide sequence ID" value="NM_001082772.1"/>
</dbReference>
<dbReference type="SMR" id="P41111"/>
<dbReference type="FunCoup" id="P41111">
    <property type="interactions" value="1757"/>
</dbReference>
<dbReference type="STRING" id="9986.ENSOCUP00000022102"/>
<dbReference type="PaxDb" id="9986-ENSOCUP00000022102"/>
<dbReference type="GeneID" id="100009560"/>
<dbReference type="KEGG" id="ocu:100009560"/>
<dbReference type="CTD" id="8890"/>
<dbReference type="eggNOG" id="KOG1467">
    <property type="taxonomic scope" value="Eukaryota"/>
</dbReference>
<dbReference type="InParanoid" id="P41111"/>
<dbReference type="OrthoDB" id="10254737at2759"/>
<dbReference type="Proteomes" id="UP000001811">
    <property type="component" value="Unplaced"/>
</dbReference>
<dbReference type="GO" id="GO:0005737">
    <property type="term" value="C:cytoplasm"/>
    <property type="evidence" value="ECO:0000250"/>
    <property type="project" value="UniProtKB"/>
</dbReference>
<dbReference type="GO" id="GO:0005829">
    <property type="term" value="C:cytosol"/>
    <property type="evidence" value="ECO:0007669"/>
    <property type="project" value="UniProtKB-SubCell"/>
</dbReference>
<dbReference type="GO" id="GO:0005851">
    <property type="term" value="C:eukaryotic translation initiation factor 2B complex"/>
    <property type="evidence" value="ECO:0000250"/>
    <property type="project" value="UniProtKB"/>
</dbReference>
<dbReference type="GO" id="GO:0005085">
    <property type="term" value="F:guanyl-nucleotide exchange factor activity"/>
    <property type="evidence" value="ECO:0000250"/>
    <property type="project" value="UniProtKB"/>
</dbReference>
<dbReference type="GO" id="GO:0003743">
    <property type="term" value="F:translation initiation factor activity"/>
    <property type="evidence" value="ECO:0007669"/>
    <property type="project" value="UniProtKB-KW"/>
</dbReference>
<dbReference type="GO" id="GO:0002183">
    <property type="term" value="P:cytoplasmic translational initiation"/>
    <property type="evidence" value="ECO:0000250"/>
    <property type="project" value="UniProtKB"/>
</dbReference>
<dbReference type="GO" id="GO:0042552">
    <property type="term" value="P:myelination"/>
    <property type="evidence" value="ECO:0000250"/>
    <property type="project" value="UniProtKB"/>
</dbReference>
<dbReference type="GO" id="GO:0014003">
    <property type="term" value="P:oligodendrocyte development"/>
    <property type="evidence" value="ECO:0000250"/>
    <property type="project" value="UniProtKB"/>
</dbReference>
<dbReference type="GO" id="GO:0001541">
    <property type="term" value="P:ovarian follicle development"/>
    <property type="evidence" value="ECO:0000250"/>
    <property type="project" value="UniProtKB"/>
</dbReference>
<dbReference type="GO" id="GO:0050852">
    <property type="term" value="P:T cell receptor signaling pathway"/>
    <property type="evidence" value="ECO:0000250"/>
    <property type="project" value="UniProtKB"/>
</dbReference>
<dbReference type="GO" id="GO:0006413">
    <property type="term" value="P:translational initiation"/>
    <property type="evidence" value="ECO:0000250"/>
    <property type="project" value="UniProtKB"/>
</dbReference>
<dbReference type="FunFam" id="3.40.50.10470:FF:000002">
    <property type="entry name" value="Probable translation initiation factor eIF-2B subunit delta"/>
    <property type="match status" value="1"/>
</dbReference>
<dbReference type="Gene3D" id="3.40.50.10470">
    <property type="entry name" value="Translation initiation factor eif-2b, domain 2"/>
    <property type="match status" value="1"/>
</dbReference>
<dbReference type="InterPro" id="IPR000649">
    <property type="entry name" value="IF-2B-related"/>
</dbReference>
<dbReference type="InterPro" id="IPR042529">
    <property type="entry name" value="IF_2B-like_C"/>
</dbReference>
<dbReference type="InterPro" id="IPR037171">
    <property type="entry name" value="NagB/RpiA_transferase-like"/>
</dbReference>
<dbReference type="PANTHER" id="PTHR10233">
    <property type="entry name" value="TRANSLATION INITIATION FACTOR EIF-2B"/>
    <property type="match status" value="1"/>
</dbReference>
<dbReference type="PANTHER" id="PTHR10233:SF14">
    <property type="entry name" value="TRANSLATION INITIATION FACTOR EIF-2B SUBUNIT DELTA"/>
    <property type="match status" value="1"/>
</dbReference>
<dbReference type="Pfam" id="PF01008">
    <property type="entry name" value="IF-2B"/>
    <property type="match status" value="1"/>
</dbReference>
<dbReference type="SUPFAM" id="SSF100950">
    <property type="entry name" value="NagB/RpiA/CoA transferase-like"/>
    <property type="match status" value="1"/>
</dbReference>
<organism>
    <name type="scientific">Oryctolagus cuniculus</name>
    <name type="common">Rabbit</name>
    <dbReference type="NCBI Taxonomy" id="9986"/>
    <lineage>
        <taxon>Eukaryota</taxon>
        <taxon>Metazoa</taxon>
        <taxon>Chordata</taxon>
        <taxon>Craniata</taxon>
        <taxon>Vertebrata</taxon>
        <taxon>Euteleostomi</taxon>
        <taxon>Mammalia</taxon>
        <taxon>Eutheria</taxon>
        <taxon>Euarchontoglires</taxon>
        <taxon>Glires</taxon>
        <taxon>Lagomorpha</taxon>
        <taxon>Leporidae</taxon>
        <taxon>Oryctolagus</taxon>
    </lineage>
</organism>
<accession>P41111</accession>
<sequence>MAAVAVAVREDSGSGMKAELSARPGAGGKEMTQEEKLQLRKEKKQQKKKRKEEKGTDVDTASAVSAAQCPGPAREAPGPGSQSSTPGEKVPAGRTKAELRAERRAKQEAERALKQARKGEQGGPPPQASPSTAGEAPAGGKRLTEHTQADDPTLLRRLVRKSERQQVPTRKDYGSKVSLFSHLPQYSRQNSLTQYMSIPSSVIHPAMVRLGLQYSQGLISGSNARCIALLRALQQVIQDYTTPPNEELSRDLVNKLKPYICFLTQCRPLSASMYNAIKFLNKEITGVSSTKREEEAKAELQAAADRYVQEKIVLAAQAILRFASKKISNGDVILVYGCSSLVSRILQEAWSEGRKFRVVVVDSRPRLEGRHMLRFLVRAGVPASYLLIPAASYVLPEVSKVLLGAHALLANGSVMSRVGTAQLALVARAHNVPVLVCCETYKFCERVQTDAFVSNELDDPDDLQCERGDHVALANWQSHPSLRLLNLVYDVTPPELVDLVITELGMIPCSSVPVVLRVKSSDQ</sequence>
<name>EI2BD_RABIT</name>
<comment type="function">
    <text evidence="2">Acts as a component of the translation initiation factor 2B (eIF2B) complex, which catalyzes the exchange of GDP for GTP on eukaryotic initiation factor 2 (eIF2) gamma subunit. Its guanine nucleotide exchange factor activity is repressed when bound to eIF2 complex phosphorylated on the alpha subunit, thereby limiting the amount of methionyl-initiator methionine tRNA available to the ribosome and consequently global translation is repressed.</text>
</comment>
<comment type="activity regulation">
    <text evidence="2">Activated by the chemical integrated stress response (ISR) inhibitor ISRIB which stimulates guanine nucleotide exchange factor activity for both phosphorylated and unphosphorylated eIF2.</text>
</comment>
<comment type="subunit">
    <text evidence="2">Component of the translation initiation factor 2B (eIF2B) complex which is a heterodecamer of two sets of five different subunits: alpha, beta, gamma, delta and epsilon. Subunits alpha, beta and delta comprise a regulatory subcomplex and subunits epsilon and gamma comprise a catalytic subcomplex. Within the complex, the hexameric regulatory complex resides at the center, with the two heterodimeric catalytic subcomplexes bound on opposite sides.</text>
</comment>
<comment type="subcellular location">
    <subcellularLocation>
        <location evidence="1">Cytoplasm</location>
        <location evidence="1">Cytosol</location>
    </subcellularLocation>
</comment>
<comment type="similarity">
    <text evidence="4">Belongs to the eIF-2B alpha/beta/delta subunits family.</text>
</comment>
<comment type="sequence caution" evidence="4">
    <conflict type="erroneous initiation">
        <sequence resource="EMBL-CDS" id="CAA53204"/>
    </conflict>
</comment>
<reference key="1">
    <citation type="journal article" date="1994" name="Biochim. Biophys. Acta">
        <title>Guanine nucleotide exchange factor for eukaryotic initiation factor-2. Cloning of cDNA for the delta-subunit of rabbit translation initiation factor-2B.</title>
        <authorList>
            <person name="Price N.T."/>
            <person name="Francia G."/>
            <person name="Hall L."/>
            <person name="Proud C.G."/>
        </authorList>
    </citation>
    <scope>NUCLEOTIDE SEQUENCE [MRNA]</scope>
    <source>
        <strain>New Zealand white</strain>
        <tissue>Liver</tissue>
    </source>
</reference>